<name>MREC_CAUVN</name>
<gene>
    <name evidence="9" type="primary">mreC</name>
    <name type="ordered locus">CCNA_01613</name>
</gene>
<keyword id="KW-0133">Cell shape</keyword>
<keyword id="KW-0175">Coiled coil</keyword>
<keyword id="KW-0574">Periplasm</keyword>
<keyword id="KW-1185">Reference proteome</keyword>
<sequence length="346" mass="36997">MRFREGPLGDLKVPLTWTAAVALIVAAVIGVAFLLADRRETLQEQAYGVTRQTVDTVARPVSGAIAAPGRWTGLGLDYVRSYFFTAHENRRLKAELAEMRQWRDRALALQDQNDRFKSLLGLRTDPPIPMAAARVVSDSRGPFANTRLADAGSERGIVVGNPVLNERGLVGRVVGVSRGVSRVLLLTDIASRTPVMIDRTNARAILTGDGGPNPKLDYLRGVDPIQQGDRVVTSGDGGVVPRGLPVGAAVKGLDGRWRVVLFADQASIDYVRILLFKDFAQLADEKQLQARSLPPVTTEDPQTSILSNPVSRPVAPTPSPATATPSAAPAARPATTATPPQTGAPR</sequence>
<organism>
    <name type="scientific">Caulobacter vibrioides (strain NA1000 / CB15N)</name>
    <name type="common">Caulobacter crescentus</name>
    <dbReference type="NCBI Taxonomy" id="565050"/>
    <lineage>
        <taxon>Bacteria</taxon>
        <taxon>Pseudomonadati</taxon>
        <taxon>Pseudomonadota</taxon>
        <taxon>Alphaproteobacteria</taxon>
        <taxon>Caulobacterales</taxon>
        <taxon>Caulobacteraceae</taxon>
        <taxon>Caulobacter</taxon>
    </lineage>
</organism>
<dbReference type="EMBL" id="CP001340">
    <property type="protein sequence ID" value="ACL95078.1"/>
    <property type="molecule type" value="Genomic_DNA"/>
</dbReference>
<dbReference type="RefSeq" id="WP_010919418.1">
    <property type="nucleotide sequence ID" value="NC_011916.1"/>
</dbReference>
<dbReference type="RefSeq" id="YP_002516986.1">
    <property type="nucleotide sequence ID" value="NC_011916.1"/>
</dbReference>
<dbReference type="SMR" id="B8H610"/>
<dbReference type="GeneID" id="7331591"/>
<dbReference type="KEGG" id="ccs:CCNA_01613"/>
<dbReference type="PATRIC" id="fig|565050.3.peg.1591"/>
<dbReference type="HOGENOM" id="CLU_042663_7_2_5"/>
<dbReference type="OrthoDB" id="8478127at2"/>
<dbReference type="PhylomeDB" id="B8H610"/>
<dbReference type="Proteomes" id="UP000001364">
    <property type="component" value="Chromosome"/>
</dbReference>
<dbReference type="GO" id="GO:0042597">
    <property type="term" value="C:periplasmic space"/>
    <property type="evidence" value="ECO:0000314"/>
    <property type="project" value="UniProtKB"/>
</dbReference>
<dbReference type="GO" id="GO:0005886">
    <property type="term" value="C:plasma membrane"/>
    <property type="evidence" value="ECO:0007669"/>
    <property type="project" value="TreeGrafter"/>
</dbReference>
<dbReference type="GO" id="GO:0043164">
    <property type="term" value="P:Gram-negative-bacterium-type cell wall biogenesis"/>
    <property type="evidence" value="ECO:0000315"/>
    <property type="project" value="UniProtKB"/>
</dbReference>
<dbReference type="GO" id="GO:0008360">
    <property type="term" value="P:regulation of cell shape"/>
    <property type="evidence" value="ECO:0000315"/>
    <property type="project" value="UniProtKB"/>
</dbReference>
<dbReference type="FunFam" id="2.40.10.350:FF:000006">
    <property type="entry name" value="Rod shape-determining protein MreC"/>
    <property type="match status" value="1"/>
</dbReference>
<dbReference type="Gene3D" id="2.40.10.340">
    <property type="entry name" value="Rod shape-determining protein MreC, domain 1"/>
    <property type="match status" value="1"/>
</dbReference>
<dbReference type="Gene3D" id="2.40.10.350">
    <property type="entry name" value="Rod shape-determining protein MreC, domain 2"/>
    <property type="match status" value="1"/>
</dbReference>
<dbReference type="InterPro" id="IPR042177">
    <property type="entry name" value="Cell/Rod_1"/>
</dbReference>
<dbReference type="InterPro" id="IPR042175">
    <property type="entry name" value="Cell/Rod_MreC_2"/>
</dbReference>
<dbReference type="InterPro" id="IPR007221">
    <property type="entry name" value="MreC"/>
</dbReference>
<dbReference type="InterPro" id="IPR055342">
    <property type="entry name" value="MreC_beta-barrel_core"/>
</dbReference>
<dbReference type="NCBIfam" id="NF010533">
    <property type="entry name" value="PRK13922.9-5"/>
    <property type="match status" value="1"/>
</dbReference>
<dbReference type="PANTHER" id="PTHR34138">
    <property type="entry name" value="CELL SHAPE-DETERMINING PROTEIN MREC"/>
    <property type="match status" value="1"/>
</dbReference>
<dbReference type="PANTHER" id="PTHR34138:SF1">
    <property type="entry name" value="CELL SHAPE-DETERMINING PROTEIN MREC"/>
    <property type="match status" value="1"/>
</dbReference>
<dbReference type="Pfam" id="PF04085">
    <property type="entry name" value="MreC"/>
    <property type="match status" value="1"/>
</dbReference>
<accession>B8H610</accession>
<protein>
    <recommendedName>
        <fullName evidence="1">Cell shape-determining protein MreC</fullName>
    </recommendedName>
    <alternativeName>
        <fullName evidence="6 7">Cell shape protein MreC</fullName>
    </alternativeName>
    <alternativeName>
        <fullName evidence="9">Rod shape-determining protein MreC</fullName>
    </alternativeName>
</protein>
<reference evidence="9" key="1">
    <citation type="journal article" date="2010" name="J. Bacteriol.">
        <title>The genetic basis of laboratory adaptation in Caulobacter crescentus.</title>
        <authorList>
            <person name="Marks M.E."/>
            <person name="Castro-Rojas C.M."/>
            <person name="Teiling C."/>
            <person name="Du L."/>
            <person name="Kapatral V."/>
            <person name="Walunas T.L."/>
            <person name="Crosson S."/>
        </authorList>
    </citation>
    <scope>NUCLEOTIDE SEQUENCE [LARGE SCALE GENOMIC DNA]</scope>
    <source>
        <strain>NA1000 / CB15N</strain>
    </source>
</reference>
<reference evidence="8" key="2">
    <citation type="journal article" date="2005" name="Proc. Natl. Acad. Sci. U.S.A.">
        <title>The cell-shape protein MreC interacts with extracytoplasmic proteins including cell wall assembly complexes in Caulobacter crescentus.</title>
        <authorList>
            <person name="Divakaruni A.V."/>
            <person name="Loo R.R."/>
            <person name="Xie Y."/>
            <person name="Loo J.A."/>
            <person name="Gober J.W."/>
        </authorList>
    </citation>
    <scope>INTERACTION WITH PENICILLIN-BINDING PROTEINS AND OUTER MEMBRANE PROTEINS</scope>
    <scope>SUBCELLULAR LOCATION</scope>
    <source>
        <strain>NA1000 / CB15N / LS107</strain>
    </source>
</reference>
<reference evidence="8" key="3">
    <citation type="journal article" date="2007" name="Mol. Microbiol.">
        <title>The cell shape proteins MreB and MreC control cell morphogenesis by positioning cell wall synthetic complexes.</title>
        <authorList>
            <person name="Divakaruni A.V."/>
            <person name="Baida C."/>
            <person name="White C.L."/>
            <person name="Gober J.W."/>
        </authorList>
    </citation>
    <scope>FUNCTION</scope>
    <scope>SUBCELLULAR LOCATION</scope>
    <scope>DISRUPTION PHENOTYPE</scope>
    <source>
        <strain>NA1000 / CB15N / LS107</strain>
    </source>
</reference>
<feature type="chain" id="PRO_0000418056" description="Cell shape-determining protein MreC">
    <location>
        <begin position="1"/>
        <end position="346"/>
    </location>
</feature>
<feature type="region of interest" description="Disordered" evidence="3">
    <location>
        <begin position="292"/>
        <end position="346"/>
    </location>
</feature>
<feature type="coiled-coil region" evidence="2">
    <location>
        <begin position="89"/>
        <end position="118"/>
    </location>
</feature>
<feature type="compositionally biased region" description="Polar residues" evidence="3">
    <location>
        <begin position="299"/>
        <end position="308"/>
    </location>
</feature>
<feature type="compositionally biased region" description="Low complexity" evidence="3">
    <location>
        <begin position="309"/>
        <end position="340"/>
    </location>
</feature>
<proteinExistence type="evidence at protein level"/>
<comment type="function">
    <text evidence="1 5">Involved in formation and maintenance of cell shape. Required for the spatial organization of components of the peptidoglycan-synthesizing holoenzyme in the periplasm and peptidoglycan synthetic activity.</text>
</comment>
<comment type="subunit">
    <text evidence="4">Interacts with penicillin-binding proteins (PBP2, PBP1a, PBP1b, PBP2a and PBP2b). Interacts with outer membrane proteins belonging to the TonB-dependent receptor family of transport proteins.</text>
</comment>
<comment type="subcellular location">
    <subcellularLocation>
        <location evidence="4 5">Periplasm</location>
    </subcellularLocation>
    <text evidence="2 4 5">Localizes in helical or banded patterns along the cell length. This localization requires a normal cell shape, but is not disrupted in the absence of intracellular filaments formed by MreB.</text>
</comment>
<comment type="disruption phenotype">
    <text evidence="5">Affects the localization of MltA, MipA and PBP2. In the case of MltA and MipA no polar localization is observed, and in that of PBP2 the banded localization pattern is lost. Depletion of both MreC and RodA results in defects in stalk growth and mutant cells expand relative to wild-type cells. They appear to arrest in expansion along the long axis of the cell.</text>
</comment>
<comment type="similarity">
    <text evidence="8">Belongs to the MreC family.</text>
</comment>
<evidence type="ECO:0000250" key="1">
    <source>
        <dbReference type="UniProtKB" id="P16926"/>
    </source>
</evidence>
<evidence type="ECO:0000255" key="2"/>
<evidence type="ECO:0000256" key="3">
    <source>
        <dbReference type="SAM" id="MobiDB-lite"/>
    </source>
</evidence>
<evidence type="ECO:0000269" key="4">
    <source>
    </source>
</evidence>
<evidence type="ECO:0000269" key="5">
    <source>
    </source>
</evidence>
<evidence type="ECO:0000303" key="6">
    <source>
    </source>
</evidence>
<evidence type="ECO:0000303" key="7">
    <source>
    </source>
</evidence>
<evidence type="ECO:0000305" key="8"/>
<evidence type="ECO:0000312" key="9">
    <source>
        <dbReference type="EMBL" id="ACL95078.1"/>
    </source>
</evidence>